<organism>
    <name type="scientific">Saccharomyces cerevisiae (strain ATCC 204508 / S288c)</name>
    <name type="common">Baker's yeast</name>
    <dbReference type="NCBI Taxonomy" id="559292"/>
    <lineage>
        <taxon>Eukaryota</taxon>
        <taxon>Fungi</taxon>
        <taxon>Dikarya</taxon>
        <taxon>Ascomycota</taxon>
        <taxon>Saccharomycotina</taxon>
        <taxon>Saccharomycetes</taxon>
        <taxon>Saccharomycetales</taxon>
        <taxon>Saccharomycetaceae</taxon>
        <taxon>Saccharomyces</taxon>
    </lineage>
</organism>
<dbReference type="EMBL" id="Z71255">
    <property type="protein sequence ID" value="CAA95025.1"/>
    <property type="molecule type" value="Genomic_DNA"/>
</dbReference>
<dbReference type="EMBL" id="Z49274">
    <property type="protein sequence ID" value="CAA89283.1"/>
    <property type="molecule type" value="Genomic_DNA"/>
</dbReference>
<dbReference type="EMBL" id="BK006949">
    <property type="protein sequence ID" value="DAA11455.1"/>
    <property type="molecule type" value="Genomic_DNA"/>
</dbReference>
<dbReference type="PIR" id="S54503">
    <property type="entry name" value="S54503"/>
</dbReference>
<dbReference type="RefSeq" id="NP_015354.1">
    <property type="nucleotide sequence ID" value="NM_001184126.1"/>
</dbReference>
<dbReference type="SMR" id="Q12028"/>
<dbReference type="BioGRID" id="36207">
    <property type="interactions" value="201"/>
</dbReference>
<dbReference type="ComplexPortal" id="CPX-532">
    <property type="entry name" value="Adaptor complex AP-1"/>
</dbReference>
<dbReference type="ComplexPortal" id="CPX-533">
    <property type="entry name" value="Adaptor complex AP-1R"/>
</dbReference>
<dbReference type="DIP" id="DIP-3913N"/>
<dbReference type="FunCoup" id="Q12028">
    <property type="interactions" value="766"/>
</dbReference>
<dbReference type="IntAct" id="Q12028">
    <property type="interactions" value="32"/>
</dbReference>
<dbReference type="MINT" id="Q12028"/>
<dbReference type="STRING" id="4932.YPR029C"/>
<dbReference type="iPTMnet" id="Q12028"/>
<dbReference type="PaxDb" id="4932-YPR029C"/>
<dbReference type="PeptideAtlas" id="Q12028"/>
<dbReference type="EnsemblFungi" id="YPR029C_mRNA">
    <property type="protein sequence ID" value="YPR029C"/>
    <property type="gene ID" value="YPR029C"/>
</dbReference>
<dbReference type="GeneID" id="856141"/>
<dbReference type="KEGG" id="sce:YPR029C"/>
<dbReference type="AGR" id="SGD:S000006233"/>
<dbReference type="SGD" id="S000006233">
    <property type="gene designation" value="APL4"/>
</dbReference>
<dbReference type="VEuPathDB" id="FungiDB:YPR029C"/>
<dbReference type="eggNOG" id="KOG1062">
    <property type="taxonomic scope" value="Eukaryota"/>
</dbReference>
<dbReference type="GeneTree" id="ENSGT00950000182838"/>
<dbReference type="HOGENOM" id="CLU_003824_0_1_1"/>
<dbReference type="InParanoid" id="Q12028"/>
<dbReference type="OMA" id="AICAMRI"/>
<dbReference type="OrthoDB" id="28053at2759"/>
<dbReference type="BioCyc" id="YEAST:G3O-34188-MONOMER"/>
<dbReference type="Reactome" id="R-SCE-432720">
    <property type="pathway name" value="Lysosome Vesicle Biogenesis"/>
</dbReference>
<dbReference type="BioGRID-ORCS" id="856141">
    <property type="hits" value="0 hits in 10 CRISPR screens"/>
</dbReference>
<dbReference type="PRO" id="PR:Q12028"/>
<dbReference type="Proteomes" id="UP000002311">
    <property type="component" value="Chromosome XVI"/>
</dbReference>
<dbReference type="RNAct" id="Q12028">
    <property type="molecule type" value="protein"/>
</dbReference>
<dbReference type="GO" id="GO:0030121">
    <property type="term" value="C:AP-1 adaptor complex"/>
    <property type="evidence" value="ECO:0000314"/>
    <property type="project" value="SGD"/>
</dbReference>
<dbReference type="GO" id="GO:0005829">
    <property type="term" value="C:cytosol"/>
    <property type="evidence" value="ECO:0007669"/>
    <property type="project" value="GOC"/>
</dbReference>
<dbReference type="GO" id="GO:0000139">
    <property type="term" value="C:Golgi membrane"/>
    <property type="evidence" value="ECO:0007669"/>
    <property type="project" value="UniProtKB-SubCell"/>
</dbReference>
<dbReference type="GO" id="GO:0035615">
    <property type="term" value="F:clathrin adaptor activity"/>
    <property type="evidence" value="ECO:0000318"/>
    <property type="project" value="GO_Central"/>
</dbReference>
<dbReference type="GO" id="GO:0030276">
    <property type="term" value="F:clathrin binding"/>
    <property type="evidence" value="ECO:0000314"/>
    <property type="project" value="SGD"/>
</dbReference>
<dbReference type="GO" id="GO:0006896">
    <property type="term" value="P:Golgi to vacuole transport"/>
    <property type="evidence" value="ECO:0000315"/>
    <property type="project" value="SGD"/>
</dbReference>
<dbReference type="GO" id="GO:0006886">
    <property type="term" value="P:intracellular protein transport"/>
    <property type="evidence" value="ECO:0007669"/>
    <property type="project" value="InterPro"/>
</dbReference>
<dbReference type="GO" id="GO:0048203">
    <property type="term" value="P:vesicle targeting, trans-Golgi to endosome"/>
    <property type="evidence" value="ECO:0000315"/>
    <property type="project" value="ComplexPortal"/>
</dbReference>
<dbReference type="FunFam" id="1.25.10.10:FF:000656">
    <property type="entry name" value="AP-1 complex subunit gamma"/>
    <property type="match status" value="1"/>
</dbReference>
<dbReference type="Gene3D" id="2.60.40.1230">
    <property type="match status" value="1"/>
</dbReference>
<dbReference type="Gene3D" id="1.25.10.10">
    <property type="entry name" value="Leucine-rich Repeat Variant"/>
    <property type="match status" value="1"/>
</dbReference>
<dbReference type="InterPro" id="IPR050840">
    <property type="entry name" value="Adaptor_Complx_Large_Subunit"/>
</dbReference>
<dbReference type="InterPro" id="IPR017107">
    <property type="entry name" value="AP1_complex_gsu"/>
</dbReference>
<dbReference type="InterPro" id="IPR011989">
    <property type="entry name" value="ARM-like"/>
</dbReference>
<dbReference type="InterPro" id="IPR016024">
    <property type="entry name" value="ARM-type_fold"/>
</dbReference>
<dbReference type="InterPro" id="IPR002553">
    <property type="entry name" value="Clathrin/coatomer_adapt-like_N"/>
</dbReference>
<dbReference type="InterPro" id="IPR008152">
    <property type="entry name" value="Clathrin_a/b/g-adaptin_app_Ig"/>
</dbReference>
<dbReference type="InterPro" id="IPR013041">
    <property type="entry name" value="Clathrin_app_Ig-like_sf"/>
</dbReference>
<dbReference type="PANTHER" id="PTHR22780">
    <property type="entry name" value="ADAPTIN, ALPHA/GAMMA/EPSILON"/>
    <property type="match status" value="1"/>
</dbReference>
<dbReference type="Pfam" id="PF01602">
    <property type="entry name" value="Adaptin_N"/>
    <property type="match status" value="1"/>
</dbReference>
<dbReference type="Pfam" id="PF02883">
    <property type="entry name" value="Alpha_adaptinC2"/>
    <property type="match status" value="1"/>
</dbReference>
<dbReference type="PIRSF" id="PIRSF037094">
    <property type="entry name" value="AP1_complex_gamma"/>
    <property type="match status" value="1"/>
</dbReference>
<dbReference type="SMART" id="SM00809">
    <property type="entry name" value="Alpha_adaptinC2"/>
    <property type="match status" value="1"/>
</dbReference>
<dbReference type="SUPFAM" id="SSF48371">
    <property type="entry name" value="ARM repeat"/>
    <property type="match status" value="1"/>
</dbReference>
<dbReference type="SUPFAM" id="SSF49348">
    <property type="entry name" value="Clathrin adaptor appendage domain"/>
    <property type="match status" value="1"/>
</dbReference>
<evidence type="ECO:0000250" key="1"/>
<evidence type="ECO:0000269" key="2">
    <source>
    </source>
</evidence>
<evidence type="ECO:0000269" key="3">
    <source>
    </source>
</evidence>
<evidence type="ECO:0000269" key="4">
    <source>
    </source>
</evidence>
<sequence>MGSSLRSFIKDVRGAKTLADERAIITKQSAKIRTKLRDDHLPHEKRRVNIQKLLYLYILGEKTHFGQVESINLIASDDFVDKRLGYLAATLLLDESEDLLTLLTNMLNNDLHHPNKYAVSLALTSLGFLSSPELARDLYPDVENIIKNSRDPFLLKKALQCAAKLIFKDVSLLEIFNIEDITKILSSHSICTHGVLLGVTKIIQSILLIGLNRKKDEDEDEDGIDYSNDILSPLSLLLRDFFIRLENMNSKNIEPGYDVQGICDPFLQCEIIYTLKLYFQVGELLNSNNVLDYKDNFCDLLTRIATNTDSTKNSGQAILYETVKTIFSLDLNQPLRVLGINILAKFLAGKDNNTKYVSLNTLLKVVPQEPTAVQRHRKFISHCLQDTDVSIRMRALELSFAILDDSNLVELVNELMKFLAKQDEDSKDLIIYTIDHLIDTFDTRVVKDESWKLDVFFNILKLVGSFINYEKINDILIIINNTSQLSDKSEFLRKMLTISLNGTSAEISEENIGWQLVLIWCIGEYGDLVLNEGNKNGADIINESSITDYLLTLQELYTATNLKIINYILTAALKLSVRFHDAKNIEKLRQLILSYTDSTDLSLQMKSNQYEIFFNQSISVKKIILETMPKFEKITEEQDNGKALSKNLISNEPVDLLSDLLGEDSKAESKASTGDNVKPIDILEEIFGEKNDIAQVPKNANKEESINHSSAVEANSGVTLPLDANKIYDSSSLNVYASLLSANSGLAHLDLYFQAKSLISDLKTFCAVPKAQKLTLGQLYPSSTINASQICKQSLKISGSGKLKLRVKLDFHLNGSSSITNEQFDHKFDETL</sequence>
<protein>
    <recommendedName>
        <fullName>AP-1 complex subunit gamma-1</fullName>
    </recommendedName>
    <alternativeName>
        <fullName>Clathrin assembly protein complex 1 gamma large chain</fullName>
    </alternativeName>
    <alternativeName>
        <fullName>Clathrin assembly protein large gamma chain</fullName>
    </alternativeName>
    <alternativeName>
        <fullName>Gamma-adaptin</fullName>
    </alternativeName>
</protein>
<comment type="function">
    <text evidence="2 4">Adaptins are components of the adapter complexes which link clathrin to receptors in coated vesicles (PubMed:10564262). Clathrin-associated protein complexes are believed to interact with the cytoplasmic tails of membrane proteins, leading to their selection and concentration (PubMed:10564262). The AP-1 complex interacts directly with clathrin (PubMed:10564262). Component of the AP-1-related (AP-1R) complex, an adapter protein complex that mediates sorting of cargo SNARE SNC1 (PubMed:26658609). In contrast to the APM1-containing AP-1 complex, AP-1R is incapable of sorting CHS3 (PubMed:26658609).</text>
</comment>
<comment type="subunit">
    <text evidence="2 4">Adapter protein complex 1 (AP-1) is a heterotetramer composed of two large adaptins (gamma-type subunit APL4 and beta-type subunit APL2), a medium adaptin (mu-type subunit APM1) and a small adaptin (sigma-type subunit APS1) (PubMed:10564262). AP-1 interacts with clathrin (PubMed:10564262). Also a component of the AP-1R complex composed of at least APM2, APL4 and APS1 (PubMed:26658609).</text>
</comment>
<comment type="interaction">
    <interactant intactId="EBI-33025">
        <id>Q12028</id>
    </interactant>
    <interactant intactId="EBI-2206">
        <id>P36000</id>
        <label>APL2</label>
    </interactant>
    <organismsDiffer>false</organismsDiffer>
    <experiments>6</experiments>
</comment>
<comment type="interaction">
    <interactant intactId="EBI-33025">
        <id>Q12028</id>
    </interactant>
    <interactant intactId="EBI-2612">
        <id>P35181</id>
        <label>APS1</label>
    </interactant>
    <organismsDiffer>false</organismsDiffer>
    <experiments>5</experiments>
</comment>
<comment type="subcellular location">
    <subcellularLocation>
        <location evidence="1">Cytoplasm</location>
    </subcellularLocation>
    <subcellularLocation>
        <location evidence="1">Golgi apparatus membrane</location>
        <topology evidence="1">Peripheral membrane protein</topology>
        <orientation evidence="1">Cytoplasmic side</orientation>
    </subcellularLocation>
    <subcellularLocation>
        <location evidence="1">Cytoplasmic vesicle</location>
        <location evidence="1">Clathrin-coated vesicle membrane</location>
        <topology evidence="1">Peripheral membrane protein</topology>
        <orientation evidence="1">Cytoplasmic side</orientation>
    </subcellularLocation>
    <text evidence="1">The coatomer is cytoplasmic or polymerized on the cytoplasmic side of the Golgi, as well as on the vesicles/buds originating from it.</text>
</comment>
<comment type="miscellaneous">
    <text evidence="3">Present with 4850 molecules/cell in log phase SD medium.</text>
</comment>
<feature type="chain" id="PRO_0000193764" description="AP-1 complex subunit gamma-1">
    <location>
        <begin position="1"/>
        <end position="832"/>
    </location>
</feature>
<feature type="domain" description="GAE">
    <location>
        <begin position="733"/>
        <end position="832"/>
    </location>
</feature>
<gene>
    <name type="primary">APL4</name>
    <name type="ordered locus">YPR029C</name>
</gene>
<name>AP1G1_YEAST</name>
<reference key="1">
    <citation type="journal article" date="1997" name="Nature">
        <title>The nucleotide sequence of Saccharomyces cerevisiae chromosome XVI.</title>
        <authorList>
            <person name="Bussey H."/>
            <person name="Storms R.K."/>
            <person name="Ahmed A."/>
            <person name="Albermann K."/>
            <person name="Allen E."/>
            <person name="Ansorge W."/>
            <person name="Araujo R."/>
            <person name="Aparicio A."/>
            <person name="Barrell B.G."/>
            <person name="Badcock K."/>
            <person name="Benes V."/>
            <person name="Botstein D."/>
            <person name="Bowman S."/>
            <person name="Brueckner M."/>
            <person name="Carpenter J."/>
            <person name="Cherry J.M."/>
            <person name="Chung E."/>
            <person name="Churcher C.M."/>
            <person name="Coster F."/>
            <person name="Davis K."/>
            <person name="Davis R.W."/>
            <person name="Dietrich F.S."/>
            <person name="Delius H."/>
            <person name="DiPaolo T."/>
            <person name="Dubois E."/>
            <person name="Duesterhoeft A."/>
            <person name="Duncan M."/>
            <person name="Floeth M."/>
            <person name="Fortin N."/>
            <person name="Friesen J.D."/>
            <person name="Fritz C."/>
            <person name="Goffeau A."/>
            <person name="Hall J."/>
            <person name="Hebling U."/>
            <person name="Heumann K."/>
            <person name="Hilbert H."/>
            <person name="Hillier L.W."/>
            <person name="Hunicke-Smith S."/>
            <person name="Hyman R.W."/>
            <person name="Johnston M."/>
            <person name="Kalman S."/>
            <person name="Kleine K."/>
            <person name="Komp C."/>
            <person name="Kurdi O."/>
            <person name="Lashkari D."/>
            <person name="Lew H."/>
            <person name="Lin A."/>
            <person name="Lin D."/>
            <person name="Louis E.J."/>
            <person name="Marathe R."/>
            <person name="Messenguy F."/>
            <person name="Mewes H.-W."/>
            <person name="Mirtipati S."/>
            <person name="Moestl D."/>
            <person name="Mueller-Auer S."/>
            <person name="Namath A."/>
            <person name="Nentwich U."/>
            <person name="Oefner P."/>
            <person name="Pearson D."/>
            <person name="Petel F.X."/>
            <person name="Pohl T.M."/>
            <person name="Purnelle B."/>
            <person name="Rajandream M.A."/>
            <person name="Rechmann S."/>
            <person name="Rieger M."/>
            <person name="Riles L."/>
            <person name="Roberts D."/>
            <person name="Schaefer M."/>
            <person name="Scharfe M."/>
            <person name="Scherens B."/>
            <person name="Schramm S."/>
            <person name="Schroeder M."/>
            <person name="Sdicu A.-M."/>
            <person name="Tettelin H."/>
            <person name="Urrestarazu L.A."/>
            <person name="Ushinsky S."/>
            <person name="Vierendeels F."/>
            <person name="Vissers S."/>
            <person name="Voss H."/>
            <person name="Walsh S.V."/>
            <person name="Wambutt R."/>
            <person name="Wang Y."/>
            <person name="Wedler E."/>
            <person name="Wedler H."/>
            <person name="Winnett E."/>
            <person name="Zhong W.-W."/>
            <person name="Zollner A."/>
            <person name="Vo D.H."/>
            <person name="Hani J."/>
        </authorList>
    </citation>
    <scope>NUCLEOTIDE SEQUENCE [LARGE SCALE GENOMIC DNA]</scope>
    <source>
        <strain>ATCC 204508 / S288c</strain>
    </source>
</reference>
<reference key="2">
    <citation type="journal article" date="2014" name="G3 (Bethesda)">
        <title>The reference genome sequence of Saccharomyces cerevisiae: Then and now.</title>
        <authorList>
            <person name="Engel S.R."/>
            <person name="Dietrich F.S."/>
            <person name="Fisk D.G."/>
            <person name="Binkley G."/>
            <person name="Balakrishnan R."/>
            <person name="Costanzo M.C."/>
            <person name="Dwight S.S."/>
            <person name="Hitz B.C."/>
            <person name="Karra K."/>
            <person name="Nash R.S."/>
            <person name="Weng S."/>
            <person name="Wong E.D."/>
            <person name="Lloyd P."/>
            <person name="Skrzypek M.S."/>
            <person name="Miyasato S.R."/>
            <person name="Simison M."/>
            <person name="Cherry J.M."/>
        </authorList>
    </citation>
    <scope>GENOME REANNOTATION</scope>
    <source>
        <strain>ATCC 204508 / S288c</strain>
    </source>
</reference>
<reference key="3">
    <citation type="journal article" date="1999" name="Mol. Biol. Cell">
        <title>Adaptor complex-independent clathrin function in yeast.</title>
        <authorList>
            <person name="Yeung B.G."/>
            <person name="Phan H.L."/>
            <person name="Payne G.S."/>
        </authorList>
    </citation>
    <scope>FUNCTION</scope>
    <scope>SUBUNIT</scope>
    <scope>INTERACTION WITH CLATHRIN</scope>
</reference>
<reference key="4">
    <citation type="journal article" date="2003" name="Nature">
        <title>Global analysis of protein expression in yeast.</title>
        <authorList>
            <person name="Ghaemmaghami S."/>
            <person name="Huh W.-K."/>
            <person name="Bower K."/>
            <person name="Howson R.W."/>
            <person name="Belle A."/>
            <person name="Dephoure N."/>
            <person name="O'Shea E.K."/>
            <person name="Weissman J.S."/>
        </authorList>
    </citation>
    <scope>LEVEL OF PROTEIN EXPRESSION [LARGE SCALE ANALYSIS]</scope>
</reference>
<reference key="5">
    <citation type="journal article" date="2016" name="Mol. Biol. Cell">
        <title>The alternate AP-1 adaptor subunit Apm2 interacts with the Mil1 regulatory protein and confers differential cargo sorting.</title>
        <authorList>
            <person name="Whitfield S.T."/>
            <person name="Burston H.E."/>
            <person name="Bean B.D."/>
            <person name="Raghuram N."/>
            <person name="Maldonado-Baez L."/>
            <person name="Davey M."/>
            <person name="Wendland B."/>
            <person name="Conibear E."/>
        </authorList>
    </citation>
    <scope>FUNCTION</scope>
    <scope>SUBUNIT</scope>
</reference>
<accession>Q12028</accession>
<accession>D6W439</accession>
<keyword id="KW-0963">Cytoplasm</keyword>
<keyword id="KW-0968">Cytoplasmic vesicle</keyword>
<keyword id="KW-0333">Golgi apparatus</keyword>
<keyword id="KW-0472">Membrane</keyword>
<keyword id="KW-0653">Protein transport</keyword>
<keyword id="KW-1185">Reference proteome</keyword>
<keyword id="KW-0813">Transport</keyword>
<proteinExistence type="evidence at protein level"/>